<organism>
    <name type="scientific">Saccharolobus islandicus (strain L.S.2.15 / Lassen #1)</name>
    <name type="common">Sulfolobus islandicus</name>
    <dbReference type="NCBI Taxonomy" id="429572"/>
    <lineage>
        <taxon>Archaea</taxon>
        <taxon>Thermoproteota</taxon>
        <taxon>Thermoprotei</taxon>
        <taxon>Sulfolobales</taxon>
        <taxon>Sulfolobaceae</taxon>
        <taxon>Saccharolobus</taxon>
    </lineage>
</organism>
<comment type="function">
    <text evidence="1">Molecular chaperone capable of stabilizing a range of proteins. Seems to fulfill an ATP-independent, HSP70-like function in archaeal de novo protein folding.</text>
</comment>
<comment type="subunit">
    <text evidence="1">Heterohexamer of two alpha and four beta subunits.</text>
</comment>
<comment type="subcellular location">
    <subcellularLocation>
        <location evidence="1">Cytoplasm</location>
    </subcellularLocation>
</comment>
<comment type="similarity">
    <text evidence="1">Belongs to the prefoldin subunit beta family.</text>
</comment>
<proteinExistence type="inferred from homology"/>
<sequence>MAEKLPPEVQAQLAKFQQLKDQLDRLLLEKSTIENELREINKVLEELSVLNADATIYKIVGNLLVKSDKTSVEKELNDRKELLELRSRTYQKQESILRKQLEDLQAKINEMLSKYYPQGGQTGIKA</sequence>
<protein>
    <recommendedName>
        <fullName evidence="1">Prefoldin subunit beta</fullName>
    </recommendedName>
    <alternativeName>
        <fullName evidence="1">GimC subunit beta</fullName>
    </alternativeName>
</protein>
<dbReference type="EMBL" id="CP001399">
    <property type="protein sequence ID" value="ACP35514.1"/>
    <property type="molecule type" value="Genomic_DNA"/>
</dbReference>
<dbReference type="RefSeq" id="WP_012711409.1">
    <property type="nucleotide sequence ID" value="NC_012589.1"/>
</dbReference>
<dbReference type="SMR" id="C3MQ51"/>
<dbReference type="KEGG" id="sis:LS215_1506"/>
<dbReference type="HOGENOM" id="CLU_131909_2_1_2"/>
<dbReference type="OrthoDB" id="204796at2157"/>
<dbReference type="Proteomes" id="UP000001747">
    <property type="component" value="Chromosome"/>
</dbReference>
<dbReference type="GO" id="GO:0005737">
    <property type="term" value="C:cytoplasm"/>
    <property type="evidence" value="ECO:0007669"/>
    <property type="project" value="UniProtKB-SubCell"/>
</dbReference>
<dbReference type="GO" id="GO:0016272">
    <property type="term" value="C:prefoldin complex"/>
    <property type="evidence" value="ECO:0007669"/>
    <property type="project" value="UniProtKB-UniRule"/>
</dbReference>
<dbReference type="GO" id="GO:0051087">
    <property type="term" value="F:protein-folding chaperone binding"/>
    <property type="evidence" value="ECO:0007669"/>
    <property type="project" value="TreeGrafter"/>
</dbReference>
<dbReference type="GO" id="GO:0051082">
    <property type="term" value="F:unfolded protein binding"/>
    <property type="evidence" value="ECO:0007669"/>
    <property type="project" value="UniProtKB-UniRule"/>
</dbReference>
<dbReference type="GO" id="GO:0051131">
    <property type="term" value="P:chaperone-mediated protein complex assembly"/>
    <property type="evidence" value="ECO:0007669"/>
    <property type="project" value="TreeGrafter"/>
</dbReference>
<dbReference type="GO" id="GO:0006457">
    <property type="term" value="P:protein folding"/>
    <property type="evidence" value="ECO:0007669"/>
    <property type="project" value="UniProtKB-UniRule"/>
</dbReference>
<dbReference type="CDD" id="cd23162">
    <property type="entry name" value="Prefoldin_beta_GimC"/>
    <property type="match status" value="1"/>
</dbReference>
<dbReference type="FunFam" id="1.10.287.370:FF:000013">
    <property type="entry name" value="Prefoldin subunit beta"/>
    <property type="match status" value="1"/>
</dbReference>
<dbReference type="Gene3D" id="1.10.287.370">
    <property type="match status" value="1"/>
</dbReference>
<dbReference type="HAMAP" id="MF_00307">
    <property type="entry name" value="PfdB"/>
    <property type="match status" value="1"/>
</dbReference>
<dbReference type="InterPro" id="IPR002777">
    <property type="entry name" value="PFD_beta-like"/>
</dbReference>
<dbReference type="InterPro" id="IPR012713">
    <property type="entry name" value="PfdB"/>
</dbReference>
<dbReference type="InterPro" id="IPR009053">
    <property type="entry name" value="Prefoldin"/>
</dbReference>
<dbReference type="NCBIfam" id="TIGR02338">
    <property type="entry name" value="gimC_beta"/>
    <property type="match status" value="1"/>
</dbReference>
<dbReference type="PANTHER" id="PTHR21431">
    <property type="entry name" value="PREFOLDIN SUBUNIT 6"/>
    <property type="match status" value="1"/>
</dbReference>
<dbReference type="PANTHER" id="PTHR21431:SF0">
    <property type="entry name" value="PREFOLDIN SUBUNIT 6"/>
    <property type="match status" value="1"/>
</dbReference>
<dbReference type="Pfam" id="PF01920">
    <property type="entry name" value="Prefoldin_2"/>
    <property type="match status" value="1"/>
</dbReference>
<dbReference type="SUPFAM" id="SSF46579">
    <property type="entry name" value="Prefoldin"/>
    <property type="match status" value="1"/>
</dbReference>
<gene>
    <name evidence="1" type="primary">pfdB</name>
    <name type="ordered locus">LS215_1506</name>
</gene>
<evidence type="ECO:0000255" key="1">
    <source>
        <dbReference type="HAMAP-Rule" id="MF_00307"/>
    </source>
</evidence>
<name>PFDB_SACI2</name>
<reference key="1">
    <citation type="journal article" date="2009" name="Proc. Natl. Acad. Sci. U.S.A.">
        <title>Biogeography of the Sulfolobus islandicus pan-genome.</title>
        <authorList>
            <person name="Reno M.L."/>
            <person name="Held N.L."/>
            <person name="Fields C.J."/>
            <person name="Burke P.V."/>
            <person name="Whitaker R.J."/>
        </authorList>
    </citation>
    <scope>NUCLEOTIDE SEQUENCE [LARGE SCALE GENOMIC DNA]</scope>
    <source>
        <strain>L.S.2.15 / Lassen #1</strain>
    </source>
</reference>
<feature type="chain" id="PRO_1000205020" description="Prefoldin subunit beta">
    <location>
        <begin position="1"/>
        <end position="126"/>
    </location>
</feature>
<accession>C3MQ51</accession>
<keyword id="KW-0143">Chaperone</keyword>
<keyword id="KW-0963">Cytoplasm</keyword>